<gene>
    <name evidence="1" type="primary">phnX</name>
    <name type="ordered locus">DvMF_0514</name>
</gene>
<sequence>MKPFLRTRVYDGPVRAVVLDWAGTAVDHGCLGPAAVFVQAFALHGVEVAVSEAREPMGSEKREHVRRMLAMDSVAARWRAVHGHVPHEADVDAVYRDVEPLMLQTIAAHAVPVPGLAEFVDRVRGRGMGLGSCTGYTGPMMEVLVPEAARRGYSPDVVVHASEVPAGRPYPWMCYLNAMRLGVHPMESMVKIGDTVADMHEARNAGMWTVGVVRTGNDVGLSEVDAARMPPDQLAARMTVAAARLREAGAHYVVDSIADCFSVIKAIEARLARGDTPYPA</sequence>
<proteinExistence type="inferred from homology"/>
<dbReference type="EC" id="3.11.1.1" evidence="1"/>
<dbReference type="EMBL" id="CP001197">
    <property type="protein sequence ID" value="ACL07471.1"/>
    <property type="molecule type" value="Genomic_DNA"/>
</dbReference>
<dbReference type="SMR" id="B8DKP2"/>
<dbReference type="STRING" id="883.DvMF_0514"/>
<dbReference type="KEGG" id="dvm:DvMF_0514"/>
<dbReference type="eggNOG" id="COG0637">
    <property type="taxonomic scope" value="Bacteria"/>
</dbReference>
<dbReference type="HOGENOM" id="CLU_045011_12_0_7"/>
<dbReference type="OrthoDB" id="5504491at2"/>
<dbReference type="GO" id="GO:0005829">
    <property type="term" value="C:cytosol"/>
    <property type="evidence" value="ECO:0007669"/>
    <property type="project" value="TreeGrafter"/>
</dbReference>
<dbReference type="GO" id="GO:0046872">
    <property type="term" value="F:metal ion binding"/>
    <property type="evidence" value="ECO:0007669"/>
    <property type="project" value="UniProtKB-KW"/>
</dbReference>
<dbReference type="GO" id="GO:0008967">
    <property type="term" value="F:phosphoglycolate phosphatase activity"/>
    <property type="evidence" value="ECO:0007669"/>
    <property type="project" value="TreeGrafter"/>
</dbReference>
<dbReference type="GO" id="GO:0050194">
    <property type="term" value="F:phosphonoacetaldehyde hydrolase activity"/>
    <property type="evidence" value="ECO:0007669"/>
    <property type="project" value="UniProtKB-EC"/>
</dbReference>
<dbReference type="GO" id="GO:0006281">
    <property type="term" value="P:DNA repair"/>
    <property type="evidence" value="ECO:0007669"/>
    <property type="project" value="TreeGrafter"/>
</dbReference>
<dbReference type="GO" id="GO:0019700">
    <property type="term" value="P:organic phosphonate catabolic process"/>
    <property type="evidence" value="ECO:0007669"/>
    <property type="project" value="InterPro"/>
</dbReference>
<dbReference type="CDD" id="cd02586">
    <property type="entry name" value="HAD_PHN"/>
    <property type="match status" value="1"/>
</dbReference>
<dbReference type="FunFam" id="1.10.150.240:FF:000006">
    <property type="entry name" value="Phosphonoacetaldehyde hydrolase"/>
    <property type="match status" value="1"/>
</dbReference>
<dbReference type="Gene3D" id="3.40.50.1000">
    <property type="entry name" value="HAD superfamily/HAD-like"/>
    <property type="match status" value="1"/>
</dbReference>
<dbReference type="Gene3D" id="1.10.150.240">
    <property type="entry name" value="Putative phosphatase, domain 2"/>
    <property type="match status" value="1"/>
</dbReference>
<dbReference type="HAMAP" id="MF_01375">
    <property type="entry name" value="PhnX"/>
    <property type="match status" value="1"/>
</dbReference>
<dbReference type="InterPro" id="IPR050155">
    <property type="entry name" value="HAD-like_hydrolase_sf"/>
</dbReference>
<dbReference type="InterPro" id="IPR036412">
    <property type="entry name" value="HAD-like_sf"/>
</dbReference>
<dbReference type="InterPro" id="IPR006439">
    <property type="entry name" value="HAD-SF_hydro_IA"/>
</dbReference>
<dbReference type="InterPro" id="IPR023214">
    <property type="entry name" value="HAD_sf"/>
</dbReference>
<dbReference type="InterPro" id="IPR023198">
    <property type="entry name" value="PGP-like_dom2"/>
</dbReference>
<dbReference type="InterPro" id="IPR006323">
    <property type="entry name" value="Phosphonoacetald_hydro"/>
</dbReference>
<dbReference type="NCBIfam" id="TIGR01549">
    <property type="entry name" value="HAD-SF-IA-v1"/>
    <property type="match status" value="1"/>
</dbReference>
<dbReference type="NCBIfam" id="TIGR01422">
    <property type="entry name" value="phosphonatase"/>
    <property type="match status" value="1"/>
</dbReference>
<dbReference type="PANTHER" id="PTHR43434">
    <property type="entry name" value="PHOSPHOGLYCOLATE PHOSPHATASE"/>
    <property type="match status" value="1"/>
</dbReference>
<dbReference type="PANTHER" id="PTHR43434:SF19">
    <property type="entry name" value="PHOSPHONOACETALDEHYDE HYDROLASE"/>
    <property type="match status" value="1"/>
</dbReference>
<dbReference type="Pfam" id="PF00702">
    <property type="entry name" value="Hydrolase"/>
    <property type="match status" value="1"/>
</dbReference>
<dbReference type="SFLD" id="SFLDG01135">
    <property type="entry name" value="C1.5.6:_HAD__Beta-PGM__Phospha"/>
    <property type="match status" value="1"/>
</dbReference>
<dbReference type="SFLD" id="SFLDS00003">
    <property type="entry name" value="Haloacid_Dehalogenase"/>
    <property type="match status" value="1"/>
</dbReference>
<dbReference type="SUPFAM" id="SSF56784">
    <property type="entry name" value="HAD-like"/>
    <property type="match status" value="1"/>
</dbReference>
<evidence type="ECO:0000255" key="1">
    <source>
        <dbReference type="HAMAP-Rule" id="MF_01375"/>
    </source>
</evidence>
<comment type="function">
    <text evidence="1">Involved in phosphonate degradation.</text>
</comment>
<comment type="catalytic activity">
    <reaction evidence="1">
        <text>phosphonoacetaldehyde + H2O = acetaldehyde + phosphate + H(+)</text>
        <dbReference type="Rhea" id="RHEA:18905"/>
        <dbReference type="ChEBI" id="CHEBI:15343"/>
        <dbReference type="ChEBI" id="CHEBI:15377"/>
        <dbReference type="ChEBI" id="CHEBI:15378"/>
        <dbReference type="ChEBI" id="CHEBI:43474"/>
        <dbReference type="ChEBI" id="CHEBI:58383"/>
        <dbReference type="EC" id="3.11.1.1"/>
    </reaction>
</comment>
<comment type="cofactor">
    <cofactor evidence="1">
        <name>Mg(2+)</name>
        <dbReference type="ChEBI" id="CHEBI:18420"/>
    </cofactor>
    <text evidence="1">Binds 1 Mg(2+) ion per subunit.</text>
</comment>
<comment type="subunit">
    <text evidence="1">Homodimer.</text>
</comment>
<comment type="similarity">
    <text evidence="1">Belongs to the HAD-like hydrolase superfamily. PhnX family.</text>
</comment>
<feature type="chain" id="PRO_1000144832" description="Phosphonoacetaldehyde hydrolase">
    <location>
        <begin position="1"/>
        <end position="280"/>
    </location>
</feature>
<feature type="active site" description="Nucleophile" evidence="1">
    <location>
        <position position="20"/>
    </location>
</feature>
<feature type="active site" description="Schiff-base intermediate with substrate" evidence="1">
    <location>
        <position position="61"/>
    </location>
</feature>
<feature type="binding site" evidence="1">
    <location>
        <position position="20"/>
    </location>
    <ligand>
        <name>Mg(2+)</name>
        <dbReference type="ChEBI" id="CHEBI:18420"/>
    </ligand>
</feature>
<feature type="binding site" evidence="1">
    <location>
        <position position="22"/>
    </location>
    <ligand>
        <name>Mg(2+)</name>
        <dbReference type="ChEBI" id="CHEBI:18420"/>
    </ligand>
</feature>
<feature type="binding site" evidence="1">
    <location>
        <position position="194"/>
    </location>
    <ligand>
        <name>Mg(2+)</name>
        <dbReference type="ChEBI" id="CHEBI:18420"/>
    </ligand>
</feature>
<organism>
    <name type="scientific">Nitratidesulfovibrio vulgaris (strain DSM 19637 / Miyazaki F)</name>
    <name type="common">Desulfovibrio vulgaris</name>
    <dbReference type="NCBI Taxonomy" id="883"/>
    <lineage>
        <taxon>Bacteria</taxon>
        <taxon>Pseudomonadati</taxon>
        <taxon>Thermodesulfobacteriota</taxon>
        <taxon>Desulfovibrionia</taxon>
        <taxon>Desulfovibrionales</taxon>
        <taxon>Desulfovibrionaceae</taxon>
        <taxon>Nitratidesulfovibrio</taxon>
    </lineage>
</organism>
<name>PHNX_NITV9</name>
<reference key="1">
    <citation type="submission" date="2008-10" db="EMBL/GenBank/DDBJ databases">
        <title>Complete sequence of Desulfovibrio vulgaris str. 'Miyazaki F'.</title>
        <authorList>
            <person name="Lucas S."/>
            <person name="Copeland A."/>
            <person name="Lapidus A."/>
            <person name="Glavina del Rio T."/>
            <person name="Dalin E."/>
            <person name="Tice H."/>
            <person name="Bruce D."/>
            <person name="Goodwin L."/>
            <person name="Pitluck S."/>
            <person name="Sims D."/>
            <person name="Brettin T."/>
            <person name="Detter J.C."/>
            <person name="Han C."/>
            <person name="Larimer F."/>
            <person name="Land M."/>
            <person name="Hauser L."/>
            <person name="Kyrpides N."/>
            <person name="Mikhailova N."/>
            <person name="Hazen T.C."/>
            <person name="Richardson P."/>
        </authorList>
    </citation>
    <scope>NUCLEOTIDE SEQUENCE [LARGE SCALE GENOMIC DNA]</scope>
    <source>
        <strain>DSM 19637 / Miyazaki F</strain>
    </source>
</reference>
<protein>
    <recommendedName>
        <fullName evidence="1">Phosphonoacetaldehyde hydrolase</fullName>
        <shortName evidence="1">Phosphonatase</shortName>
        <ecNumber evidence="1">3.11.1.1</ecNumber>
    </recommendedName>
    <alternativeName>
        <fullName evidence="1">Phosphonoacetaldehyde phosphonohydrolase</fullName>
    </alternativeName>
</protein>
<keyword id="KW-0378">Hydrolase</keyword>
<keyword id="KW-0460">Magnesium</keyword>
<keyword id="KW-0479">Metal-binding</keyword>
<keyword id="KW-0704">Schiff base</keyword>
<accession>B8DKP2</accession>